<protein>
    <recommendedName>
        <fullName>Basic membrane protein C</fullName>
    </recommendedName>
    <alternativeName>
        <fullName evidence="3">Probable substrate-binding protein BmpC</fullName>
    </alternativeName>
</protein>
<comment type="function">
    <text evidence="5">May be part of an ABC-type nucleoside uptake system involved in the purine salvage pathway.</text>
</comment>
<comment type="subunit">
    <text evidence="1">Monomer.</text>
</comment>
<comment type="subcellular location">
    <subcellularLocation>
        <location evidence="2">Cell inner membrane</location>
        <topology evidence="2">Lipid-anchor</topology>
        <orientation evidence="2">Periplasmic side</orientation>
    </subcellularLocation>
</comment>
<comment type="similarity">
    <text evidence="4">Belongs to the BMP lipoprotein family.</text>
</comment>
<gene>
    <name type="primary">bmpC</name>
    <name type="ordered locus">BB_0384</name>
</gene>
<accession>P0CL65</accession>
<accession>O50169</accession>
<accession>Q44859</accession>
<accession>Q93V09</accession>
<evidence type="ECO:0000250" key="1">
    <source>
        <dbReference type="UniProtKB" id="P0CL55"/>
    </source>
</evidence>
<evidence type="ECO:0000269" key="2">
    <source>
    </source>
</evidence>
<evidence type="ECO:0000303" key="3">
    <source>
    </source>
</evidence>
<evidence type="ECO:0000305" key="4"/>
<evidence type="ECO:0000305" key="5">
    <source>
    </source>
</evidence>
<name>BMPC_BORBU</name>
<dbReference type="EMBL" id="U49938">
    <property type="protein sequence ID" value="AAC44711.1"/>
    <property type="molecule type" value="Genomic_DNA"/>
</dbReference>
<dbReference type="EMBL" id="AF400111">
    <property type="protein sequence ID" value="AAM89913.1"/>
    <property type="molecule type" value="Genomic_DNA"/>
</dbReference>
<dbReference type="EMBL" id="AE000783">
    <property type="protein sequence ID" value="AAC66756.1"/>
    <property type="molecule type" value="Genomic_DNA"/>
</dbReference>
<dbReference type="PIR" id="G70147">
    <property type="entry name" value="G70147"/>
</dbReference>
<dbReference type="RefSeq" id="NP_212518.1">
    <property type="nucleotide sequence ID" value="NC_001318.1"/>
</dbReference>
<dbReference type="RefSeq" id="WP_002657842.1">
    <property type="nucleotide sequence ID" value="NC_001318.1"/>
</dbReference>
<dbReference type="SMR" id="P0CL65"/>
<dbReference type="STRING" id="224326.BB_0384"/>
<dbReference type="PaxDb" id="224326-BB_0384"/>
<dbReference type="EnsemblBacteria" id="AAC66756">
    <property type="protein sequence ID" value="AAC66756"/>
    <property type="gene ID" value="BB_0384"/>
</dbReference>
<dbReference type="GeneID" id="56567812"/>
<dbReference type="KEGG" id="bbu:BB_0384"/>
<dbReference type="PATRIC" id="fig|224326.49.peg.779"/>
<dbReference type="HOGENOM" id="CLU_038813_0_2_12"/>
<dbReference type="OrthoDB" id="9769871at2"/>
<dbReference type="Proteomes" id="UP000001807">
    <property type="component" value="Chromosome"/>
</dbReference>
<dbReference type="GO" id="GO:0005886">
    <property type="term" value="C:plasma membrane"/>
    <property type="evidence" value="ECO:0007669"/>
    <property type="project" value="UniProtKB-SubCell"/>
</dbReference>
<dbReference type="CDD" id="cd06354">
    <property type="entry name" value="PBP1_PrnA-like"/>
    <property type="match status" value="1"/>
</dbReference>
<dbReference type="Gene3D" id="3.40.50.2300">
    <property type="match status" value="2"/>
</dbReference>
<dbReference type="InterPro" id="IPR050957">
    <property type="entry name" value="BMP_lipoprotein"/>
</dbReference>
<dbReference type="InterPro" id="IPR028082">
    <property type="entry name" value="Peripla_BP_I"/>
</dbReference>
<dbReference type="InterPro" id="IPR003760">
    <property type="entry name" value="PnrA-like"/>
</dbReference>
<dbReference type="PANTHER" id="PTHR34296:SF2">
    <property type="entry name" value="ABC TRANSPORTER GUANOSINE-BINDING PROTEIN NUPN"/>
    <property type="match status" value="1"/>
</dbReference>
<dbReference type="PANTHER" id="PTHR34296">
    <property type="entry name" value="TRANSCRIPTIONAL ACTIVATOR PROTEIN MED"/>
    <property type="match status" value="1"/>
</dbReference>
<dbReference type="Pfam" id="PF02608">
    <property type="entry name" value="Bmp"/>
    <property type="match status" value="1"/>
</dbReference>
<dbReference type="SUPFAM" id="SSF53822">
    <property type="entry name" value="Periplasmic binding protein-like I"/>
    <property type="match status" value="1"/>
</dbReference>
<dbReference type="PROSITE" id="PS51257">
    <property type="entry name" value="PROKAR_LIPOPROTEIN"/>
    <property type="match status" value="1"/>
</dbReference>
<proteinExistence type="evidence at protein level"/>
<sequence>MFKRFIFITLSLLVFACFKSNKKSIKSDKVVVGVLAHGSFYDKGYNQSVHDGVVKLRDNFGIKLITKSLRPYPIEGKRLLTVDEAMTEDAYEVQKNPLNLFWLIGYRFSDLSVKLSYERPDIYYGIIDAFDYGDIQVPKNSLAIKFRNEEAAFLAGYIAAKMSRKEKIGFLTGPMSEHVKDFKFGFKAGIFYANPKLRLVSKKAPSLFDKEKGKAMALFMYKEDKVGVIFPIAGITGLGVYDAAKELGPKYYVIGLNQDQSYIAPQNVITSIIKDIGKVIYSISSEYINNRVFKGGIIIDRGLKEGVIEIVKDPDVLNNRLVDEVIDLENKIISGEIIVPDSEYAFDLFKSKL</sequence>
<keyword id="KW-0997">Cell inner membrane</keyword>
<keyword id="KW-1003">Cell membrane</keyword>
<keyword id="KW-0449">Lipoprotein</keyword>
<keyword id="KW-0472">Membrane</keyword>
<keyword id="KW-0564">Palmitate</keyword>
<keyword id="KW-1185">Reference proteome</keyword>
<keyword id="KW-0732">Signal</keyword>
<keyword id="KW-0813">Transport</keyword>
<organism>
    <name type="scientific">Borreliella burgdorferi (strain ATCC 35210 / DSM 4680 / CIP 102532 / B31)</name>
    <name type="common">Borrelia burgdorferi</name>
    <dbReference type="NCBI Taxonomy" id="224326"/>
    <lineage>
        <taxon>Bacteria</taxon>
        <taxon>Pseudomonadati</taxon>
        <taxon>Spirochaetota</taxon>
        <taxon>Spirochaetia</taxon>
        <taxon>Spirochaetales</taxon>
        <taxon>Borreliaceae</taxon>
        <taxon>Borreliella</taxon>
    </lineage>
</organism>
<reference key="1">
    <citation type="journal article" date="1994" name="FEMS Microbiol. Lett.">
        <title>Cloning and DNA sequence analysis of bmpC, a gene encoding a potential membrane lipoprotein of Borrelia burgdorferi.</title>
        <authorList>
            <person name="Aron L."/>
            <person name="Alekshun M."/>
            <person name="Perlee L."/>
            <person name="Schwartz I."/>
            <person name="Godfrey H.P."/>
            <person name="Cabello F."/>
        </authorList>
    </citation>
    <scope>NUCLEOTIDE SEQUENCE [GENOMIC DNA]</scope>
    <source>
        <strain>ATCC 53899 / 297</strain>
    </source>
</reference>
<reference key="2">
    <citation type="journal article" date="1996" name="FEMS Microbiol. Lett.">
        <title>Identification and mapping of a chromosomal gene cluster of Borrelia burgdorferi containing genes expressed in vivo.</title>
        <authorList>
            <person name="Aron L."/>
            <person name="Toth C."/>
            <person name="Godfrey H.P."/>
            <person name="Cabello F.C."/>
        </authorList>
    </citation>
    <scope>NUCLEOTIDE SEQUENCE [GENOMIC DNA]</scope>
    <source>
        <strain>ATCC 53899 / 297</strain>
    </source>
</reference>
<reference key="3">
    <citation type="submission" date="2001-07" db="EMBL/GenBank/DDBJ databases">
        <authorList>
            <person name="Orlova T."/>
            <person name="Bugrysheva J."/>
            <person name="Novikova S."/>
            <person name="Godfrey H.P."/>
            <person name="Cabello F.C."/>
        </authorList>
    </citation>
    <scope>NUCLEOTIDE SEQUENCE [GENOMIC DNA]</scope>
    <source>
        <strain>BL206</strain>
    </source>
</reference>
<reference key="4">
    <citation type="journal article" date="1997" name="Nature">
        <title>Genomic sequence of a Lyme disease spirochaete, Borrelia burgdorferi.</title>
        <authorList>
            <person name="Fraser C.M."/>
            <person name="Casjens S."/>
            <person name="Huang W.M."/>
            <person name="Sutton G.G."/>
            <person name="Clayton R.A."/>
            <person name="Lathigra R."/>
            <person name="White O."/>
            <person name="Ketchum K.A."/>
            <person name="Dodson R.J."/>
            <person name="Hickey E.K."/>
            <person name="Gwinn M.L."/>
            <person name="Dougherty B.A."/>
            <person name="Tomb J.-F."/>
            <person name="Fleischmann R.D."/>
            <person name="Richardson D.L."/>
            <person name="Peterson J.D."/>
            <person name="Kerlavage A.R."/>
            <person name="Quackenbush J."/>
            <person name="Salzberg S.L."/>
            <person name="Hanson M."/>
            <person name="van Vugt R."/>
            <person name="Palmer N."/>
            <person name="Adams M.D."/>
            <person name="Gocayne J.D."/>
            <person name="Weidman J.F."/>
            <person name="Utterback T.R."/>
            <person name="Watthey L."/>
            <person name="McDonald L.A."/>
            <person name="Artiach P."/>
            <person name="Bowman C."/>
            <person name="Garland S.A."/>
            <person name="Fujii C."/>
            <person name="Cotton M.D."/>
            <person name="Horst K."/>
            <person name="Roberts K.M."/>
            <person name="Hatch B."/>
            <person name="Smith H.O."/>
            <person name="Venter J.C."/>
        </authorList>
    </citation>
    <scope>NUCLEOTIDE SEQUENCE [LARGE SCALE GENOMIC DNA]</scope>
    <source>
        <strain>ATCC 35210 / DSM 4680 / CIP 102532 / B31</strain>
    </source>
</reference>
<reference key="5">
    <citation type="journal article" date="2017" name="J. Bacteriol.">
        <title>Comprehensive Spatial Analysis of the Borrelia burgdorferi Lipoproteome Reveals a Compartmentalization Bias toward the Bacterial Surface.</title>
        <authorList>
            <person name="Dowdell A.S."/>
            <person name="Murphy M.D."/>
            <person name="Azodi C."/>
            <person name="Swanson S.K."/>
            <person name="Florens L."/>
            <person name="Chen S."/>
            <person name="Zueckert W.R."/>
        </authorList>
    </citation>
    <scope>SUBCELLULAR LOCATION</scope>
    <scope>IDENTIFICATION BY MASS SPECTROMETRY</scope>
    <source>
        <strain>ATCC 35210 / DSM 4680 / CIP 102532 / B31</strain>
    </source>
</reference>
<reference key="6">
    <citation type="journal article" date="2020" name="Infect. Immun.">
        <title>Structural and Biomolecular Analyses of Borrelia burgdorferi BmpD Reveal a Substrate-Binding Protein of an ABC-Type Nucleoside Transporter Family.</title>
        <authorList>
            <person name="Cuellar J."/>
            <person name="Astrand M."/>
            <person name="Elovaara H."/>
            <person name="Pietikainen A."/>
            <person name="Siren S."/>
            <person name="Liljeblad A."/>
            <person name="Guedez G."/>
            <person name="Salminen T.A."/>
            <person name="Hytonen J."/>
        </authorList>
    </citation>
    <scope>POSSIBLE FUNCTION</scope>
    <source>
        <strain>ATCC 35210 / DSM 4680 / CIP 102532 / B31</strain>
    </source>
</reference>
<feature type="signal peptide" evidence="4">
    <location>
        <begin position="1"/>
        <end position="16"/>
    </location>
</feature>
<feature type="chain" id="PRO_0000018003" description="Basic membrane protein C">
    <location>
        <begin position="17"/>
        <end position="353"/>
    </location>
</feature>
<feature type="lipid moiety-binding region" description="N-palmitoyl cysteine" evidence="4">
    <location>
        <position position="17"/>
    </location>
</feature>
<feature type="lipid moiety-binding region" description="S-diacylglycerol cysteine" evidence="4">
    <location>
        <position position="17"/>
    </location>
</feature>
<feature type="sequence variant" description="In strain: 297.">
    <original>V</original>
    <variation>L</variation>
    <location>
        <position position="179"/>
    </location>
</feature>